<gene>
    <name evidence="1" type="primary">murB</name>
    <name type="ordered locus">RPR_02145</name>
</gene>
<dbReference type="EC" id="1.3.1.98" evidence="1"/>
<dbReference type="EMBL" id="CP001227">
    <property type="protein sequence ID" value="ACR47276.1"/>
    <property type="molecule type" value="Genomic_DNA"/>
</dbReference>
<dbReference type="RefSeq" id="WP_012736549.1">
    <property type="nucleotide sequence ID" value="NC_012730.1"/>
</dbReference>
<dbReference type="SMR" id="C4K125"/>
<dbReference type="KEGG" id="rpk:RPR_02145"/>
<dbReference type="HOGENOM" id="CLU_035304_1_0_5"/>
<dbReference type="UniPathway" id="UPA00219"/>
<dbReference type="Proteomes" id="UP000005015">
    <property type="component" value="Chromosome"/>
</dbReference>
<dbReference type="GO" id="GO:0005829">
    <property type="term" value="C:cytosol"/>
    <property type="evidence" value="ECO:0007669"/>
    <property type="project" value="TreeGrafter"/>
</dbReference>
<dbReference type="GO" id="GO:0071949">
    <property type="term" value="F:FAD binding"/>
    <property type="evidence" value="ECO:0007669"/>
    <property type="project" value="InterPro"/>
</dbReference>
<dbReference type="GO" id="GO:0008762">
    <property type="term" value="F:UDP-N-acetylmuramate dehydrogenase activity"/>
    <property type="evidence" value="ECO:0007669"/>
    <property type="project" value="UniProtKB-UniRule"/>
</dbReference>
<dbReference type="GO" id="GO:0051301">
    <property type="term" value="P:cell division"/>
    <property type="evidence" value="ECO:0007669"/>
    <property type="project" value="UniProtKB-KW"/>
</dbReference>
<dbReference type="GO" id="GO:0071555">
    <property type="term" value="P:cell wall organization"/>
    <property type="evidence" value="ECO:0007669"/>
    <property type="project" value="UniProtKB-KW"/>
</dbReference>
<dbReference type="GO" id="GO:0009252">
    <property type="term" value="P:peptidoglycan biosynthetic process"/>
    <property type="evidence" value="ECO:0007669"/>
    <property type="project" value="UniProtKB-UniRule"/>
</dbReference>
<dbReference type="GO" id="GO:0008360">
    <property type="term" value="P:regulation of cell shape"/>
    <property type="evidence" value="ECO:0007669"/>
    <property type="project" value="UniProtKB-KW"/>
</dbReference>
<dbReference type="Gene3D" id="3.30.465.10">
    <property type="match status" value="1"/>
</dbReference>
<dbReference type="Gene3D" id="3.90.78.10">
    <property type="entry name" value="UDP-N-acetylenolpyruvoylglucosamine reductase, C-terminal domain"/>
    <property type="match status" value="1"/>
</dbReference>
<dbReference type="Gene3D" id="3.30.43.10">
    <property type="entry name" value="Uridine Diphospho-n-acetylenolpyruvylglucosamine Reductase, domain 2"/>
    <property type="match status" value="1"/>
</dbReference>
<dbReference type="HAMAP" id="MF_00037">
    <property type="entry name" value="MurB"/>
    <property type="match status" value="1"/>
</dbReference>
<dbReference type="InterPro" id="IPR016166">
    <property type="entry name" value="FAD-bd_PCMH"/>
</dbReference>
<dbReference type="InterPro" id="IPR036318">
    <property type="entry name" value="FAD-bd_PCMH-like_sf"/>
</dbReference>
<dbReference type="InterPro" id="IPR016167">
    <property type="entry name" value="FAD-bd_PCMH_sub1"/>
</dbReference>
<dbReference type="InterPro" id="IPR016169">
    <property type="entry name" value="FAD-bd_PCMH_sub2"/>
</dbReference>
<dbReference type="InterPro" id="IPR003170">
    <property type="entry name" value="MurB"/>
</dbReference>
<dbReference type="InterPro" id="IPR011601">
    <property type="entry name" value="MurB_C"/>
</dbReference>
<dbReference type="InterPro" id="IPR036635">
    <property type="entry name" value="MurB_C_sf"/>
</dbReference>
<dbReference type="InterPro" id="IPR006094">
    <property type="entry name" value="Oxid_FAD_bind_N"/>
</dbReference>
<dbReference type="NCBIfam" id="TIGR00179">
    <property type="entry name" value="murB"/>
    <property type="match status" value="1"/>
</dbReference>
<dbReference type="NCBIfam" id="NF010480">
    <property type="entry name" value="PRK13905.1"/>
    <property type="match status" value="1"/>
</dbReference>
<dbReference type="PANTHER" id="PTHR21071">
    <property type="entry name" value="UDP-N-ACETYLENOLPYRUVOYLGLUCOSAMINE REDUCTASE"/>
    <property type="match status" value="1"/>
</dbReference>
<dbReference type="PANTHER" id="PTHR21071:SF4">
    <property type="entry name" value="UDP-N-ACETYLENOLPYRUVOYLGLUCOSAMINE REDUCTASE"/>
    <property type="match status" value="1"/>
</dbReference>
<dbReference type="Pfam" id="PF01565">
    <property type="entry name" value="FAD_binding_4"/>
    <property type="match status" value="1"/>
</dbReference>
<dbReference type="Pfam" id="PF02873">
    <property type="entry name" value="MurB_C"/>
    <property type="match status" value="1"/>
</dbReference>
<dbReference type="SUPFAM" id="SSF56176">
    <property type="entry name" value="FAD-binding/transporter-associated domain-like"/>
    <property type="match status" value="1"/>
</dbReference>
<dbReference type="SUPFAM" id="SSF56194">
    <property type="entry name" value="Uridine diphospho-N-Acetylenolpyruvylglucosamine reductase, MurB, C-terminal domain"/>
    <property type="match status" value="1"/>
</dbReference>
<dbReference type="PROSITE" id="PS51387">
    <property type="entry name" value="FAD_PCMH"/>
    <property type="match status" value="1"/>
</dbReference>
<name>MURB_RICPU</name>
<sequence>MLILPIVKGEYKKDYNLKHLTWFKVGGNAEIFFKPLDSEDLKSFLIQNKQKLPIKTFGAGSNIIIRDGGIEGVVIKLGQNFSNIEFIDNHLIVGSSCLNYNLAKFCQANAISGFEFLVGIPGTIGGGVAMNAGAYGSEFKDIVVQIEAIDFAGNFLTFTNEAIGFKYRSNNLPKNLIILKVVFKINKGDSENILLRMNEINNARSSTQPIKERTGGSTFANPEGHKSWELIDKAGLRGYRIGGASMSELHCNFMINNGDATAKDLEDLGDFVRQKVCEDSGVKLEWEIKRIGRHP</sequence>
<reference key="1">
    <citation type="journal article" date="2009" name="PLoS ONE">
        <title>Genome sequence of the endosymbiont Rickettsia peacockii and comparison with virulent Rickettsia rickettsii: identification of virulence factors.</title>
        <authorList>
            <person name="Felsheim R.F."/>
            <person name="Kurtti T.J."/>
            <person name="Munderloh U.G."/>
        </authorList>
    </citation>
    <scope>NUCLEOTIDE SEQUENCE [LARGE SCALE GENOMIC DNA]</scope>
    <source>
        <strain>Rustic</strain>
    </source>
</reference>
<organism>
    <name type="scientific">Rickettsia peacockii (strain Rustic)</name>
    <dbReference type="NCBI Taxonomy" id="562019"/>
    <lineage>
        <taxon>Bacteria</taxon>
        <taxon>Pseudomonadati</taxon>
        <taxon>Pseudomonadota</taxon>
        <taxon>Alphaproteobacteria</taxon>
        <taxon>Rickettsiales</taxon>
        <taxon>Rickettsiaceae</taxon>
        <taxon>Rickettsieae</taxon>
        <taxon>Rickettsia</taxon>
        <taxon>spotted fever group</taxon>
    </lineage>
</organism>
<accession>C4K125</accession>
<comment type="function">
    <text evidence="1">Cell wall formation.</text>
</comment>
<comment type="catalytic activity">
    <reaction evidence="1">
        <text>UDP-N-acetyl-alpha-D-muramate + NADP(+) = UDP-N-acetyl-3-O-(1-carboxyvinyl)-alpha-D-glucosamine + NADPH + H(+)</text>
        <dbReference type="Rhea" id="RHEA:12248"/>
        <dbReference type="ChEBI" id="CHEBI:15378"/>
        <dbReference type="ChEBI" id="CHEBI:57783"/>
        <dbReference type="ChEBI" id="CHEBI:58349"/>
        <dbReference type="ChEBI" id="CHEBI:68483"/>
        <dbReference type="ChEBI" id="CHEBI:70757"/>
        <dbReference type="EC" id="1.3.1.98"/>
    </reaction>
</comment>
<comment type="cofactor">
    <cofactor evidence="1">
        <name>FAD</name>
        <dbReference type="ChEBI" id="CHEBI:57692"/>
    </cofactor>
</comment>
<comment type="pathway">
    <text evidence="1">Cell wall biogenesis; peptidoglycan biosynthesis.</text>
</comment>
<comment type="subcellular location">
    <subcellularLocation>
        <location evidence="1">Cytoplasm</location>
    </subcellularLocation>
</comment>
<comment type="similarity">
    <text evidence="1">Belongs to the MurB family.</text>
</comment>
<evidence type="ECO:0000255" key="1">
    <source>
        <dbReference type="HAMAP-Rule" id="MF_00037"/>
    </source>
</evidence>
<proteinExistence type="inferred from homology"/>
<feature type="chain" id="PRO_1000202055" description="UDP-N-acetylenolpyruvoylglucosamine reductase">
    <location>
        <begin position="1"/>
        <end position="295"/>
    </location>
</feature>
<feature type="domain" description="FAD-binding PCMH-type" evidence="1">
    <location>
        <begin position="24"/>
        <end position="188"/>
    </location>
</feature>
<feature type="active site" evidence="1">
    <location>
        <position position="168"/>
    </location>
</feature>
<feature type="active site" description="Proton donor" evidence="1">
    <location>
        <position position="217"/>
    </location>
</feature>
<feature type="active site" evidence="1">
    <location>
        <position position="287"/>
    </location>
</feature>
<keyword id="KW-0131">Cell cycle</keyword>
<keyword id="KW-0132">Cell division</keyword>
<keyword id="KW-0133">Cell shape</keyword>
<keyword id="KW-0961">Cell wall biogenesis/degradation</keyword>
<keyword id="KW-0963">Cytoplasm</keyword>
<keyword id="KW-0274">FAD</keyword>
<keyword id="KW-0285">Flavoprotein</keyword>
<keyword id="KW-0521">NADP</keyword>
<keyword id="KW-0560">Oxidoreductase</keyword>
<keyword id="KW-0573">Peptidoglycan synthesis</keyword>
<protein>
    <recommendedName>
        <fullName evidence="1">UDP-N-acetylenolpyruvoylglucosamine reductase</fullName>
        <ecNumber evidence="1">1.3.1.98</ecNumber>
    </recommendedName>
    <alternativeName>
        <fullName evidence="1">UDP-N-acetylmuramate dehydrogenase</fullName>
    </alternativeName>
</protein>